<sequence length="189" mass="20179">MQVILLQRVAKLGQMGEVVNVKDGYARNYLLPQGKALRANESNIKSFEARKAQLEAQNLETKKEAAAVAEKLDGQSFVVIRSASDAGALYGSVTTRDAADAATEAGFTVDRGQVVLDRPIKELGLHTVTVTLHPEVAVKITLNVARSPEEAELQASGKSIQELAAEAEAAADFEIAELFDEIGAASQDE</sequence>
<proteinExistence type="inferred from homology"/>
<name>RL9_CERS5</name>
<comment type="function">
    <text evidence="1">Binds to the 23S rRNA.</text>
</comment>
<comment type="similarity">
    <text evidence="1">Belongs to the bacterial ribosomal protein bL9 family.</text>
</comment>
<gene>
    <name evidence="1" type="primary">rplI</name>
    <name type="ordered locus">Rsph17025_1350</name>
</gene>
<feature type="chain" id="PRO_1000014847" description="Large ribosomal subunit protein bL9">
    <location>
        <begin position="1"/>
        <end position="189"/>
    </location>
</feature>
<protein>
    <recommendedName>
        <fullName evidence="1">Large ribosomal subunit protein bL9</fullName>
    </recommendedName>
    <alternativeName>
        <fullName evidence="2">50S ribosomal protein L9</fullName>
    </alternativeName>
</protein>
<dbReference type="EMBL" id="CP000661">
    <property type="protein sequence ID" value="ABP70247.1"/>
    <property type="molecule type" value="Genomic_DNA"/>
</dbReference>
<dbReference type="SMR" id="A4WS83"/>
<dbReference type="STRING" id="349102.Rsph17025_1350"/>
<dbReference type="KEGG" id="rsq:Rsph17025_1350"/>
<dbReference type="eggNOG" id="COG0359">
    <property type="taxonomic scope" value="Bacteria"/>
</dbReference>
<dbReference type="HOGENOM" id="CLU_078938_1_0_5"/>
<dbReference type="BioCyc" id="RSPH349102:G1G8M-1388-MONOMER"/>
<dbReference type="GO" id="GO:1990904">
    <property type="term" value="C:ribonucleoprotein complex"/>
    <property type="evidence" value="ECO:0007669"/>
    <property type="project" value="UniProtKB-KW"/>
</dbReference>
<dbReference type="GO" id="GO:0005840">
    <property type="term" value="C:ribosome"/>
    <property type="evidence" value="ECO:0007669"/>
    <property type="project" value="UniProtKB-KW"/>
</dbReference>
<dbReference type="GO" id="GO:0019843">
    <property type="term" value="F:rRNA binding"/>
    <property type="evidence" value="ECO:0007669"/>
    <property type="project" value="UniProtKB-UniRule"/>
</dbReference>
<dbReference type="GO" id="GO:0003735">
    <property type="term" value="F:structural constituent of ribosome"/>
    <property type="evidence" value="ECO:0007669"/>
    <property type="project" value="InterPro"/>
</dbReference>
<dbReference type="GO" id="GO:0006412">
    <property type="term" value="P:translation"/>
    <property type="evidence" value="ECO:0007669"/>
    <property type="project" value="UniProtKB-UniRule"/>
</dbReference>
<dbReference type="FunFam" id="3.40.5.10:FF:000003">
    <property type="entry name" value="50S ribosomal protein L9"/>
    <property type="match status" value="1"/>
</dbReference>
<dbReference type="Gene3D" id="3.10.430.100">
    <property type="entry name" value="Ribosomal protein L9, C-terminal domain"/>
    <property type="match status" value="1"/>
</dbReference>
<dbReference type="Gene3D" id="3.40.5.10">
    <property type="entry name" value="Ribosomal protein L9, N-terminal domain"/>
    <property type="match status" value="1"/>
</dbReference>
<dbReference type="HAMAP" id="MF_00503">
    <property type="entry name" value="Ribosomal_bL9"/>
    <property type="match status" value="1"/>
</dbReference>
<dbReference type="InterPro" id="IPR000244">
    <property type="entry name" value="Ribosomal_bL9"/>
</dbReference>
<dbReference type="InterPro" id="IPR009027">
    <property type="entry name" value="Ribosomal_bL9/RNase_H1_N"/>
</dbReference>
<dbReference type="InterPro" id="IPR020594">
    <property type="entry name" value="Ribosomal_bL9_bac/chp"/>
</dbReference>
<dbReference type="InterPro" id="IPR020069">
    <property type="entry name" value="Ribosomal_bL9_C"/>
</dbReference>
<dbReference type="InterPro" id="IPR036791">
    <property type="entry name" value="Ribosomal_bL9_C_sf"/>
</dbReference>
<dbReference type="InterPro" id="IPR020070">
    <property type="entry name" value="Ribosomal_bL9_N"/>
</dbReference>
<dbReference type="InterPro" id="IPR036935">
    <property type="entry name" value="Ribosomal_bL9_N_sf"/>
</dbReference>
<dbReference type="NCBIfam" id="TIGR00158">
    <property type="entry name" value="L9"/>
    <property type="match status" value="1"/>
</dbReference>
<dbReference type="PANTHER" id="PTHR21368">
    <property type="entry name" value="50S RIBOSOMAL PROTEIN L9"/>
    <property type="match status" value="1"/>
</dbReference>
<dbReference type="Pfam" id="PF03948">
    <property type="entry name" value="Ribosomal_L9_C"/>
    <property type="match status" value="1"/>
</dbReference>
<dbReference type="Pfam" id="PF01281">
    <property type="entry name" value="Ribosomal_L9_N"/>
    <property type="match status" value="1"/>
</dbReference>
<dbReference type="SUPFAM" id="SSF55658">
    <property type="entry name" value="L9 N-domain-like"/>
    <property type="match status" value="1"/>
</dbReference>
<dbReference type="SUPFAM" id="SSF55653">
    <property type="entry name" value="Ribosomal protein L9 C-domain"/>
    <property type="match status" value="1"/>
</dbReference>
<dbReference type="PROSITE" id="PS00651">
    <property type="entry name" value="RIBOSOMAL_L9"/>
    <property type="match status" value="1"/>
</dbReference>
<accession>A4WS83</accession>
<evidence type="ECO:0000255" key="1">
    <source>
        <dbReference type="HAMAP-Rule" id="MF_00503"/>
    </source>
</evidence>
<evidence type="ECO:0000305" key="2"/>
<reference key="1">
    <citation type="submission" date="2007-04" db="EMBL/GenBank/DDBJ databases">
        <title>Complete sequence of chromosome of Rhodobacter sphaeroides ATCC 17025.</title>
        <authorList>
            <consortium name="US DOE Joint Genome Institute"/>
            <person name="Copeland A."/>
            <person name="Lucas S."/>
            <person name="Lapidus A."/>
            <person name="Barry K."/>
            <person name="Detter J.C."/>
            <person name="Glavina del Rio T."/>
            <person name="Hammon N."/>
            <person name="Israni S."/>
            <person name="Dalin E."/>
            <person name="Tice H."/>
            <person name="Pitluck S."/>
            <person name="Chertkov O."/>
            <person name="Brettin T."/>
            <person name="Bruce D."/>
            <person name="Han C."/>
            <person name="Schmutz J."/>
            <person name="Larimer F."/>
            <person name="Land M."/>
            <person name="Hauser L."/>
            <person name="Kyrpides N."/>
            <person name="Kim E."/>
            <person name="Richardson P."/>
            <person name="Mackenzie C."/>
            <person name="Choudhary M."/>
            <person name="Donohue T.J."/>
            <person name="Kaplan S."/>
        </authorList>
    </citation>
    <scope>NUCLEOTIDE SEQUENCE [LARGE SCALE GENOMIC DNA]</scope>
    <source>
        <strain>ATCC 17025 / ATH 2.4.3</strain>
    </source>
</reference>
<organism>
    <name type="scientific">Cereibacter sphaeroides (strain ATCC 17025 / ATH 2.4.3)</name>
    <name type="common">Rhodobacter sphaeroides</name>
    <dbReference type="NCBI Taxonomy" id="349102"/>
    <lineage>
        <taxon>Bacteria</taxon>
        <taxon>Pseudomonadati</taxon>
        <taxon>Pseudomonadota</taxon>
        <taxon>Alphaproteobacteria</taxon>
        <taxon>Rhodobacterales</taxon>
        <taxon>Paracoccaceae</taxon>
        <taxon>Cereibacter</taxon>
    </lineage>
</organism>
<keyword id="KW-0687">Ribonucleoprotein</keyword>
<keyword id="KW-0689">Ribosomal protein</keyword>
<keyword id="KW-0694">RNA-binding</keyword>
<keyword id="KW-0699">rRNA-binding</keyword>